<accession>Q8EG66</accession>
<comment type="function">
    <text evidence="1 2">Involved in olefin biosynthesis (PubMed:20418444). Catalyzes a non-decarboxylative head-to-head Claisen condensation of two acyl-CoA molecules, generating an (R)-2-alkyl-3-oxoalkanoate (By similarity). The S.oneidensis oleABCD genes produce 3,6,9,12,15,19,22,25,28-hentriacontanonaene, which may aid the cells in adapting to a sudden drop in temperature (PubMed:20418444).</text>
</comment>
<comment type="catalytic activity">
    <reaction evidence="1">
        <text>a 1,2-saturated acyl-CoA + an acyl-CoA + H2O = an (R)-2-alkyl-3-oxoalkanoate + 2 CoA + H(+)</text>
        <dbReference type="Rhea" id="RHEA:55980"/>
        <dbReference type="ChEBI" id="CHEBI:15377"/>
        <dbReference type="ChEBI" id="CHEBI:15378"/>
        <dbReference type="ChEBI" id="CHEBI:57287"/>
        <dbReference type="ChEBI" id="CHEBI:58342"/>
        <dbReference type="ChEBI" id="CHEBI:138341"/>
        <dbReference type="ChEBI" id="CHEBI:142092"/>
        <dbReference type="EC" id="2.3.3.20"/>
    </reaction>
    <physiologicalReaction direction="left-to-right" evidence="1">
        <dbReference type="Rhea" id="RHEA:55981"/>
    </physiologicalReaction>
</comment>
<comment type="disruption phenotype">
    <text evidence="2">Deletion of the entire oleABCD gene cluster leads to the complete absence of nonpolar extractable products. The oleABCD deletion strain shows a significantly longer lag phase than the wild-type strain when shifted to a lower temperature.</text>
</comment>
<comment type="similarity">
    <text evidence="4">Belongs to the thiolase-like superfamily. OleA family.</text>
</comment>
<gene>
    <name evidence="3" type="primary">oleA</name>
    <name evidence="5" type="ordered locus">SO_1742</name>
</gene>
<reference key="1">
    <citation type="journal article" date="2002" name="Nat. Biotechnol.">
        <title>Genome sequence of the dissimilatory metal ion-reducing bacterium Shewanella oneidensis.</title>
        <authorList>
            <person name="Heidelberg J.F."/>
            <person name="Paulsen I.T."/>
            <person name="Nelson K.E."/>
            <person name="Gaidos E.J."/>
            <person name="Nelson W.C."/>
            <person name="Read T.D."/>
            <person name="Eisen J.A."/>
            <person name="Seshadri R."/>
            <person name="Ward N.L."/>
            <person name="Methe B.A."/>
            <person name="Clayton R.A."/>
            <person name="Meyer T."/>
            <person name="Tsapin A."/>
            <person name="Scott J."/>
            <person name="Beanan M.J."/>
            <person name="Brinkac L.M."/>
            <person name="Daugherty S.C."/>
            <person name="DeBoy R.T."/>
            <person name="Dodson R.J."/>
            <person name="Durkin A.S."/>
            <person name="Haft D.H."/>
            <person name="Kolonay J.F."/>
            <person name="Madupu R."/>
            <person name="Peterson J.D."/>
            <person name="Umayam L.A."/>
            <person name="White O."/>
            <person name="Wolf A.M."/>
            <person name="Vamathevan J.J."/>
            <person name="Weidman J.F."/>
            <person name="Impraim M."/>
            <person name="Lee K."/>
            <person name="Berry K.J."/>
            <person name="Lee C."/>
            <person name="Mueller J."/>
            <person name="Khouri H.M."/>
            <person name="Gill J."/>
            <person name="Utterback T.R."/>
            <person name="McDonald L.A."/>
            <person name="Feldblyum T.V."/>
            <person name="Smith H.O."/>
            <person name="Venter J.C."/>
            <person name="Nealson K.H."/>
            <person name="Fraser C.M."/>
        </authorList>
    </citation>
    <scope>NUCLEOTIDE SEQUENCE [LARGE SCALE GENOMIC DNA]</scope>
    <source>
        <strain>ATCC 700550 / JCM 31522 / CIP 106686 / LMG 19005 / NCIMB 14063 / MR-1</strain>
    </source>
</reference>
<reference key="2">
    <citation type="journal article" date="2010" name="Appl. Environ. Microbiol.">
        <title>Structure, function, and insights into the biosynthesis of a head-to-head hydrocarbon in Shewanella oneidensis strain MR-1.</title>
        <authorList>
            <person name="Sukovich D.J."/>
            <person name="Seffernick J.L."/>
            <person name="Richman J.E."/>
            <person name="Hunt K.A."/>
            <person name="Gralnick J.A."/>
            <person name="Wackett L.P."/>
        </authorList>
    </citation>
    <scope>FUNCTION IN OLEFIN BIOSYNTHESIS</scope>
    <scope>DISRUPTION PHENOTYPE</scope>
    <source>
        <strain>ATCC 700550 / JCM 31522 / CIP 106686 / LMG 19005 / NCIMB 14063 / MR-1</strain>
    </source>
</reference>
<keyword id="KW-0012">Acyltransferase</keyword>
<keyword id="KW-1185">Reference proteome</keyword>
<keyword id="KW-0808">Transferase</keyword>
<organism>
    <name type="scientific">Shewanella oneidensis (strain ATCC 700550 / JCM 31522 / CIP 106686 / LMG 19005 / NCIMB 14063 / MR-1)</name>
    <dbReference type="NCBI Taxonomy" id="211586"/>
    <lineage>
        <taxon>Bacteria</taxon>
        <taxon>Pseudomonadati</taxon>
        <taxon>Pseudomonadota</taxon>
        <taxon>Gammaproteobacteria</taxon>
        <taxon>Alteromonadales</taxon>
        <taxon>Shewanellaceae</taxon>
        <taxon>Shewanella</taxon>
    </lineage>
</organism>
<name>OLEA_SHEON</name>
<protein>
    <recommendedName>
        <fullName evidence="4">Acyl-CoA:acyl-CoA alkyltransferase</fullName>
        <ecNumber evidence="1">2.3.3.20</ecNumber>
    </recommendedName>
</protein>
<evidence type="ECO:0000250" key="1">
    <source>
        <dbReference type="UniProtKB" id="Q8PDX2"/>
    </source>
</evidence>
<evidence type="ECO:0000269" key="2">
    <source>
    </source>
</evidence>
<evidence type="ECO:0000303" key="3">
    <source>
    </source>
</evidence>
<evidence type="ECO:0000305" key="4"/>
<evidence type="ECO:0000312" key="5">
    <source>
        <dbReference type="EMBL" id="AAN54796.1"/>
    </source>
</evidence>
<proteinExistence type="evidence at protein level"/>
<sequence length="349" mass="37831">MKYSRVFINSLAYELAPVVVSSSELESRLAPLYQKFRIPMGQLAALTGITERRWWPKGHQLSDGAINAAHKAIAETGIDVAELGAVVYTGVCRDQHEPATACRIAAALGVSKDTAIYDISNACLGVLSGILDIANRIELGQIKAGMVVSCESARDIVDVTIDNMLADPTMQNFAQSLATLTGGSGAVAVILTDGSLPLTNVRKHQLLGASHLSAPQHHQLCQWGLQEVGHNIYREFMRTDAVTLLKEGVELAKHTWEHFLAQRNWLVEQVDKVICHQVGASNRKQVLSALNIPPEKEFPTYQLLGNMGTVSLPVTAAMAHDQGFLRPGDQVSFLGIGSGLNCMMLGIKW</sequence>
<dbReference type="EC" id="2.3.3.20" evidence="1"/>
<dbReference type="EMBL" id="AE014299">
    <property type="protein sequence ID" value="AAN54796.1"/>
    <property type="molecule type" value="Genomic_DNA"/>
</dbReference>
<dbReference type="RefSeq" id="NP_717352.1">
    <property type="nucleotide sequence ID" value="NC_004347.2"/>
</dbReference>
<dbReference type="RefSeq" id="WP_011071874.1">
    <property type="nucleotide sequence ID" value="NZ_CP053946.1"/>
</dbReference>
<dbReference type="SMR" id="Q8EG66"/>
<dbReference type="STRING" id="211586.SO_1742"/>
<dbReference type="PaxDb" id="211586-SO_1742"/>
<dbReference type="KEGG" id="son:SO_1742"/>
<dbReference type="PATRIC" id="fig|211586.12.peg.1676"/>
<dbReference type="eggNOG" id="COG0332">
    <property type="taxonomic scope" value="Bacteria"/>
</dbReference>
<dbReference type="HOGENOM" id="CLU_039592_4_2_6"/>
<dbReference type="OrthoDB" id="9788274at2"/>
<dbReference type="PhylomeDB" id="Q8EG66"/>
<dbReference type="BioCyc" id="MetaCyc:MONOMER-17299"/>
<dbReference type="BioCyc" id="SONE211586:G1GMP-1597-MONOMER"/>
<dbReference type="Proteomes" id="UP000008186">
    <property type="component" value="Chromosome"/>
</dbReference>
<dbReference type="GO" id="GO:0016746">
    <property type="term" value="F:acyltransferase activity"/>
    <property type="evidence" value="ECO:0007669"/>
    <property type="project" value="UniProtKB-KW"/>
</dbReference>
<dbReference type="GO" id="GO:0044550">
    <property type="term" value="P:secondary metabolite biosynthetic process"/>
    <property type="evidence" value="ECO:0000318"/>
    <property type="project" value="GO_Central"/>
</dbReference>
<dbReference type="CDD" id="cd00830">
    <property type="entry name" value="KAS_III"/>
    <property type="match status" value="1"/>
</dbReference>
<dbReference type="FunFam" id="3.40.47.10:FF:000119">
    <property type="entry name" value="Anthraniloyl-CoA anthraniloyltransferase"/>
    <property type="match status" value="1"/>
</dbReference>
<dbReference type="FunFam" id="3.40.47.10:FF:000113">
    <property type="entry name" value="Putative 3-oxoacyl-(Acyl-carrier-protein) synthase III"/>
    <property type="match status" value="1"/>
</dbReference>
<dbReference type="Gene3D" id="3.40.47.10">
    <property type="match status" value="2"/>
</dbReference>
<dbReference type="InterPro" id="IPR013747">
    <property type="entry name" value="ACP_syn_III_C"/>
</dbReference>
<dbReference type="InterPro" id="IPR016039">
    <property type="entry name" value="Thiolase-like"/>
</dbReference>
<dbReference type="NCBIfam" id="NF006720">
    <property type="entry name" value="PRK09258.1"/>
    <property type="match status" value="1"/>
</dbReference>
<dbReference type="PANTHER" id="PTHR34069">
    <property type="entry name" value="3-OXOACYL-[ACYL-CARRIER-PROTEIN] SYNTHASE 3"/>
    <property type="match status" value="1"/>
</dbReference>
<dbReference type="PANTHER" id="PTHR34069:SF3">
    <property type="entry name" value="ACYL-COA:ACYL-COA ALKYLTRANSFERASE"/>
    <property type="match status" value="1"/>
</dbReference>
<dbReference type="Pfam" id="PF08541">
    <property type="entry name" value="ACP_syn_III_C"/>
    <property type="match status" value="1"/>
</dbReference>
<dbReference type="SUPFAM" id="SSF53901">
    <property type="entry name" value="Thiolase-like"/>
    <property type="match status" value="1"/>
</dbReference>
<feature type="chain" id="PRO_0000446911" description="Acyl-CoA:acyl-CoA alkyltransferase">
    <location>
        <begin position="1"/>
        <end position="349"/>
    </location>
</feature>
<feature type="active site" description="Proton acceptor" evidence="1">
    <location>
        <position position="97"/>
    </location>
</feature>
<feature type="active site" description="Acyl-thioester intermediate" evidence="1">
    <location>
        <position position="123"/>
    </location>
</feature>
<feature type="site" description="Important for activity" evidence="1">
    <location>
        <position position="276"/>
    </location>
</feature>